<name>AGO1A_ORYSJ</name>
<protein>
    <recommendedName>
        <fullName>Protein argonaute 1A</fullName>
        <shortName>OsAGO1a</shortName>
    </recommendedName>
</protein>
<accession>Q6EU14</accession>
<accession>A0A0N7KFV1</accession>
<comment type="function">
    <text evidence="1">Probably involved in the RNA silencing pathway. May bind to short RNAs such as microRNAs (miRNAs) or short interfering RNAs (siRNAs), and represses the translation of mRNAs which are complementary to them (By similarity).</text>
</comment>
<comment type="similarity">
    <text evidence="5">Belongs to the argonaute family. Ago subfamily.</text>
</comment>
<comment type="sequence caution" evidence="5">
    <conflict type="frameshift">
        <sequence resource="EMBL" id="AK111553"/>
    </conflict>
</comment>
<gene>
    <name type="primary">AGO1A</name>
    <name type="ordered locus">Os02g0672200</name>
    <name type="ordered locus">LOC_Os02g45070</name>
    <name type="ORF">OJ1493_H11.13</name>
</gene>
<proteinExistence type="evidence at transcript level"/>
<reference key="1">
    <citation type="journal article" date="2005" name="Nature">
        <title>The map-based sequence of the rice genome.</title>
        <authorList>
            <consortium name="International rice genome sequencing project (IRGSP)"/>
        </authorList>
    </citation>
    <scope>NUCLEOTIDE SEQUENCE [LARGE SCALE GENOMIC DNA]</scope>
    <source>
        <strain>cv. Nipponbare</strain>
    </source>
</reference>
<reference key="2">
    <citation type="journal article" date="2008" name="Nucleic Acids Res.">
        <title>The rice annotation project database (RAP-DB): 2008 update.</title>
        <authorList>
            <consortium name="The rice annotation project (RAP)"/>
        </authorList>
    </citation>
    <scope>GENOME REANNOTATION</scope>
    <source>
        <strain>cv. Nipponbare</strain>
    </source>
</reference>
<reference key="3">
    <citation type="journal article" date="2013" name="Rice">
        <title>Improvement of the Oryza sativa Nipponbare reference genome using next generation sequence and optical map data.</title>
        <authorList>
            <person name="Kawahara Y."/>
            <person name="de la Bastide M."/>
            <person name="Hamilton J.P."/>
            <person name="Kanamori H."/>
            <person name="McCombie W.R."/>
            <person name="Ouyang S."/>
            <person name="Schwartz D.C."/>
            <person name="Tanaka T."/>
            <person name="Wu J."/>
            <person name="Zhou S."/>
            <person name="Childs K.L."/>
            <person name="Davidson R.M."/>
            <person name="Lin H."/>
            <person name="Quesada-Ocampo L."/>
            <person name="Vaillancourt B."/>
            <person name="Sakai H."/>
            <person name="Lee S.S."/>
            <person name="Kim J."/>
            <person name="Numa H."/>
            <person name="Itoh T."/>
            <person name="Buell C.R."/>
            <person name="Matsumoto T."/>
        </authorList>
    </citation>
    <scope>GENOME REANNOTATION</scope>
    <source>
        <strain>cv. Nipponbare</strain>
    </source>
</reference>
<reference key="4">
    <citation type="journal article" date="2003" name="Science">
        <title>Collection, mapping, and annotation of over 28,000 cDNA clones from japonica rice.</title>
        <authorList>
            <consortium name="The rice full-length cDNA consortium"/>
        </authorList>
    </citation>
    <scope>NUCLEOTIDE SEQUENCE [LARGE SCALE MRNA]</scope>
    <source>
        <strain>cv. Nipponbare</strain>
    </source>
</reference>
<reference key="5">
    <citation type="journal article" date="2008" name="BMC Genomics">
        <title>Genome-wide identification, organization and phylogenetic analysis of dicer-like, argonaute and RNA-dependent RNA polymerase gene families and their expression analysis during reproductive development and stress in rice.</title>
        <authorList>
            <person name="Kapoor M."/>
            <person name="Arora R."/>
            <person name="Lama T."/>
            <person name="Nijhawan A."/>
            <person name="Khurana J.P."/>
            <person name="Tyagi A.K."/>
            <person name="Kapoor S."/>
        </authorList>
    </citation>
    <scope>GENE FAMILY</scope>
    <scope>NOMENCLATURE</scope>
</reference>
<keyword id="KW-1185">Reference proteome</keyword>
<keyword id="KW-0943">RNA-mediated gene silencing</keyword>
<dbReference type="EMBL" id="AP004188">
    <property type="protein sequence ID" value="BAD27856.1"/>
    <property type="molecule type" value="Genomic_DNA"/>
</dbReference>
<dbReference type="EMBL" id="AP008208">
    <property type="protein sequence ID" value="BAF09618.1"/>
    <property type="molecule type" value="Genomic_DNA"/>
</dbReference>
<dbReference type="EMBL" id="AP014958">
    <property type="protein sequence ID" value="BAS80241.1"/>
    <property type="molecule type" value="Genomic_DNA"/>
</dbReference>
<dbReference type="EMBL" id="AK111553">
    <property type="status" value="NOT_ANNOTATED_CDS"/>
    <property type="molecule type" value="mRNA"/>
</dbReference>
<dbReference type="RefSeq" id="XP_015626096.1">
    <property type="nucleotide sequence ID" value="XM_015770610.1"/>
</dbReference>
<dbReference type="SMR" id="Q6EU14"/>
<dbReference type="FunCoup" id="Q6EU14">
    <property type="interactions" value="2929"/>
</dbReference>
<dbReference type="STRING" id="39947.Q6EU14"/>
<dbReference type="PaxDb" id="39947-Q6EU14"/>
<dbReference type="EnsemblPlants" id="Os02t0672200-01">
    <property type="protein sequence ID" value="Os02t0672200-01"/>
    <property type="gene ID" value="Os02g0672200"/>
</dbReference>
<dbReference type="Gramene" id="Os02t0672200-01">
    <property type="protein sequence ID" value="Os02t0672200-01"/>
    <property type="gene ID" value="Os02g0672200"/>
</dbReference>
<dbReference type="KEGG" id="dosa:Os02g0672200"/>
<dbReference type="eggNOG" id="KOG1041">
    <property type="taxonomic scope" value="Eukaryota"/>
</dbReference>
<dbReference type="HOGENOM" id="CLU_004544_0_0_1"/>
<dbReference type="InParanoid" id="Q6EU14"/>
<dbReference type="OMA" id="KTEPRNA"/>
<dbReference type="OrthoDB" id="10252740at2759"/>
<dbReference type="Proteomes" id="UP000000763">
    <property type="component" value="Chromosome 2"/>
</dbReference>
<dbReference type="Proteomes" id="UP000059680">
    <property type="component" value="Chromosome 2"/>
</dbReference>
<dbReference type="ExpressionAtlas" id="Q6EU14">
    <property type="expression patterns" value="baseline and differential"/>
</dbReference>
<dbReference type="GO" id="GO:0005737">
    <property type="term" value="C:cytoplasm"/>
    <property type="evidence" value="ECO:0000318"/>
    <property type="project" value="GO_Central"/>
</dbReference>
<dbReference type="GO" id="GO:0005634">
    <property type="term" value="C:nucleus"/>
    <property type="evidence" value="ECO:0000318"/>
    <property type="project" value="GO_Central"/>
</dbReference>
<dbReference type="GO" id="GO:0003723">
    <property type="term" value="F:RNA binding"/>
    <property type="evidence" value="ECO:0000318"/>
    <property type="project" value="GO_Central"/>
</dbReference>
<dbReference type="GO" id="GO:0004521">
    <property type="term" value="F:RNA endonuclease activity"/>
    <property type="evidence" value="ECO:0000318"/>
    <property type="project" value="GO_Central"/>
</dbReference>
<dbReference type="GO" id="GO:0031047">
    <property type="term" value="P:regulatory ncRNA-mediated gene silencing"/>
    <property type="evidence" value="ECO:0000318"/>
    <property type="project" value="GO_Central"/>
</dbReference>
<dbReference type="CDD" id="cd02846">
    <property type="entry name" value="PAZ_argonaute_like"/>
    <property type="match status" value="1"/>
</dbReference>
<dbReference type="CDD" id="cd04657">
    <property type="entry name" value="Piwi_ago-like"/>
    <property type="match status" value="1"/>
</dbReference>
<dbReference type="FunFam" id="3.40.50.2300:FF:000110">
    <property type="entry name" value="Argonaute 10"/>
    <property type="match status" value="1"/>
</dbReference>
<dbReference type="FunFam" id="3.30.420.10:FF:000013">
    <property type="entry name" value="protein argonaute 10-like"/>
    <property type="match status" value="1"/>
</dbReference>
<dbReference type="FunFam" id="2.170.260.10:FF:000001">
    <property type="entry name" value="Protein argonaute-2"/>
    <property type="match status" value="1"/>
</dbReference>
<dbReference type="Gene3D" id="3.40.50.2300">
    <property type="match status" value="1"/>
</dbReference>
<dbReference type="Gene3D" id="2.170.260.10">
    <property type="entry name" value="paz domain"/>
    <property type="match status" value="1"/>
</dbReference>
<dbReference type="Gene3D" id="3.30.420.10">
    <property type="entry name" value="Ribonuclease H-like superfamily/Ribonuclease H"/>
    <property type="match status" value="1"/>
</dbReference>
<dbReference type="InterPro" id="IPR014811">
    <property type="entry name" value="ArgoL1"/>
</dbReference>
<dbReference type="InterPro" id="IPR032472">
    <property type="entry name" value="ArgoL2"/>
</dbReference>
<dbReference type="InterPro" id="IPR024357">
    <property type="entry name" value="Argonaut_Gly-rich"/>
</dbReference>
<dbReference type="InterPro" id="IPR032473">
    <property type="entry name" value="Argonaute_Mid_dom"/>
</dbReference>
<dbReference type="InterPro" id="IPR032474">
    <property type="entry name" value="Argonaute_N"/>
</dbReference>
<dbReference type="InterPro" id="IPR003100">
    <property type="entry name" value="PAZ_dom"/>
</dbReference>
<dbReference type="InterPro" id="IPR036085">
    <property type="entry name" value="PAZ_dom_sf"/>
</dbReference>
<dbReference type="InterPro" id="IPR003165">
    <property type="entry name" value="Piwi"/>
</dbReference>
<dbReference type="InterPro" id="IPR045246">
    <property type="entry name" value="Piwi_ago-like"/>
</dbReference>
<dbReference type="InterPro" id="IPR012337">
    <property type="entry name" value="RNaseH-like_sf"/>
</dbReference>
<dbReference type="InterPro" id="IPR036397">
    <property type="entry name" value="RNaseH_sf"/>
</dbReference>
<dbReference type="PANTHER" id="PTHR22891">
    <property type="entry name" value="EUKARYOTIC TRANSLATION INITIATION FACTOR 2C"/>
    <property type="match status" value="1"/>
</dbReference>
<dbReference type="Pfam" id="PF08699">
    <property type="entry name" value="ArgoL1"/>
    <property type="match status" value="1"/>
</dbReference>
<dbReference type="Pfam" id="PF16488">
    <property type="entry name" value="ArgoL2"/>
    <property type="match status" value="1"/>
</dbReference>
<dbReference type="Pfam" id="PF16487">
    <property type="entry name" value="ArgoMid"/>
    <property type="match status" value="1"/>
</dbReference>
<dbReference type="Pfam" id="PF16486">
    <property type="entry name" value="ArgoN"/>
    <property type="match status" value="1"/>
</dbReference>
<dbReference type="Pfam" id="PF12764">
    <property type="entry name" value="Gly-rich_Ago1"/>
    <property type="match status" value="1"/>
</dbReference>
<dbReference type="Pfam" id="PF02170">
    <property type="entry name" value="PAZ"/>
    <property type="match status" value="1"/>
</dbReference>
<dbReference type="Pfam" id="PF02171">
    <property type="entry name" value="Piwi"/>
    <property type="match status" value="1"/>
</dbReference>
<dbReference type="SMART" id="SM01163">
    <property type="entry name" value="DUF1785"/>
    <property type="match status" value="1"/>
</dbReference>
<dbReference type="SMART" id="SM00949">
    <property type="entry name" value="PAZ"/>
    <property type="match status" value="1"/>
</dbReference>
<dbReference type="SMART" id="SM00950">
    <property type="entry name" value="Piwi"/>
    <property type="match status" value="1"/>
</dbReference>
<dbReference type="SUPFAM" id="SSF101690">
    <property type="entry name" value="PAZ domain"/>
    <property type="match status" value="1"/>
</dbReference>
<dbReference type="SUPFAM" id="SSF53098">
    <property type="entry name" value="Ribonuclease H-like"/>
    <property type="match status" value="1"/>
</dbReference>
<dbReference type="PROSITE" id="PS50821">
    <property type="entry name" value="PAZ"/>
    <property type="match status" value="1"/>
</dbReference>
<dbReference type="PROSITE" id="PS50822">
    <property type="entry name" value="PIWI"/>
    <property type="match status" value="1"/>
</dbReference>
<evidence type="ECO:0000250" key="1"/>
<evidence type="ECO:0000255" key="2">
    <source>
        <dbReference type="PROSITE-ProRule" id="PRU00142"/>
    </source>
</evidence>
<evidence type="ECO:0000255" key="3">
    <source>
        <dbReference type="PROSITE-ProRule" id="PRU00150"/>
    </source>
</evidence>
<evidence type="ECO:0000256" key="4">
    <source>
        <dbReference type="SAM" id="MobiDB-lite"/>
    </source>
</evidence>
<evidence type="ECO:0000305" key="5"/>
<organism>
    <name type="scientific">Oryza sativa subsp. japonica</name>
    <name type="common">Rice</name>
    <dbReference type="NCBI Taxonomy" id="39947"/>
    <lineage>
        <taxon>Eukaryota</taxon>
        <taxon>Viridiplantae</taxon>
        <taxon>Streptophyta</taxon>
        <taxon>Embryophyta</taxon>
        <taxon>Tracheophyta</taxon>
        <taxon>Spermatophyta</taxon>
        <taxon>Magnoliopsida</taxon>
        <taxon>Liliopsida</taxon>
        <taxon>Poales</taxon>
        <taxon>Poaceae</taxon>
        <taxon>BOP clade</taxon>
        <taxon>Oryzoideae</taxon>
        <taxon>Oryzeae</taxon>
        <taxon>Oryzinae</taxon>
        <taxon>Oryza</taxon>
        <taxon>Oryza sativa</taxon>
    </lineage>
</organism>
<sequence>MAFQLDNGYYSHQALAMMRKKKTEPRNAGESSGTQQATGAPGRGPSQRPERAQQHGGGGWQPANPQYAQQAGRGGGQHQGRGGRYQGRGGPTSHQPGGGPVEYQAHEYYGRGVQRQGGMPQHRSGSGGHGVPASPSRTVPELHQASQDQYQATVVAPSPSRTGPSSLPVEASSEEVQHQFQELAIQGQSPTSQAIQPAPPSSKSVRFPMRPGKGTFGDRCIVKANHFFAELPDKDLHQYDVSITPEVPSRGVNRAVIGEIVTQYRQSHLGGRLPVYDGRKSLYTAGPLPFTSRTFDVILQDEEESLAVGQGAQRRERPFKVVIKFAARADLHHLAMFLAGRQADAPQEALQVLDIVLRELPTARYSPVARSFYSPNLGRRQQLGEGLESWRGFYQSIRPTQMGLSLNIDMSSTAFIEPLPVIDFVAQLLNRDISVRPLSDADRVKIKKALRGVKVEVTHRGNMRRKYRISGLTSQATRELSFPIDNHGTVKTVVQYFQETYGFNIKHTTLPCLQVGNQQRPNYLPMEVCKIVEGQRYSKRLNEKQITALLKVTCQRPQERELDILQTVHHNAYHQDPYAQEFGIRIDERLASVEARVLPPPWLKYHDSGREKDVLPRIGQWNMMNKKMVNGGRVNNWTCINFSRHVQDNAARSFCRELAIMCQISGMDFSIDPVVPLVTARPEHVERALKARYQEAMNILKPQGGELDLLIAILPDNNGSLYGDLKRICETDLGLVSQCCLTKHVFKMSKQYLANVALKINVKVGGRNTVLVDALTRRIPLVSDRPTIIFGADVTHPHPGEDSSPSIAAVVASQDWPEVTKYAGLVSAQAHRQELIQDLFKVWKDPQRGTVSGGMIRELLISFKRATGQKPQRIIFYRDGVSEGQFYQVLFYELDAIRKACASLEADYQPPVTFVVVQKRHHTRLFANNHKDQRTVDRSGNILPGTVVDSKICHPTEFDFYLCSHAGIQGTSRPAHYHVLWDENKFTADGLQTLTNNLCYTYARCTRSVSIVPPAYYAHLAAFRARFYMEPDTSDSGSMASGAHTRGGGPLPGARSTKPAGNVAVRPLPDLKENVKRVMFYC</sequence>
<feature type="chain" id="PRO_0000378425" description="Protein argonaute 1A">
    <location>
        <begin position="1"/>
        <end position="1082"/>
    </location>
</feature>
<feature type="domain" description="PAZ" evidence="2">
    <location>
        <begin position="420"/>
        <end position="533"/>
    </location>
</feature>
<feature type="domain" description="Piwi" evidence="3">
    <location>
        <begin position="709"/>
        <end position="1030"/>
    </location>
</feature>
<feature type="region of interest" description="Disordered" evidence="4">
    <location>
        <begin position="17"/>
        <end position="148"/>
    </location>
</feature>
<feature type="region of interest" description="Disordered" evidence="4">
    <location>
        <begin position="187"/>
        <end position="208"/>
    </location>
</feature>
<feature type="region of interest" description="Disordered" evidence="4">
    <location>
        <begin position="1036"/>
        <end position="1065"/>
    </location>
</feature>
<feature type="compositionally biased region" description="Polar residues" evidence="4">
    <location>
        <begin position="29"/>
        <end position="38"/>
    </location>
</feature>
<feature type="compositionally biased region" description="Gly residues" evidence="4">
    <location>
        <begin position="72"/>
        <end position="100"/>
    </location>
</feature>
<feature type="sequence conflict" description="In Ref. 4; AK111553." evidence="5" ref="4">
    <original>G</original>
    <variation>A</variation>
    <location>
        <position position="163"/>
    </location>
</feature>
<feature type="sequence conflict" description="In Ref. 4; AK111553." evidence="5" ref="4">
    <original>K</original>
    <variation>E</variation>
    <location>
        <position position="280"/>
    </location>
</feature>